<protein>
    <recommendedName>
        <fullName>Pyruvate-flavodoxin oxidoreductase</fullName>
        <ecNumber>1.2.7.-</ecNumber>
    </recommendedName>
</protein>
<proteinExistence type="inferred from homology"/>
<accession>P19543</accession>
<geneLocation type="plasmid">
    <name>pEA3</name>
</geneLocation>
<reference key="1">
    <citation type="submission" date="1994-03" db="EMBL/GenBank/DDBJ databases">
        <authorList>
            <person name="Schwickerath O."/>
        </authorList>
    </citation>
    <scope>NUCLEOTIDE SEQUENCE [GENOMIC DNA]</scope>
    <source>
        <strain>333</strain>
    </source>
</reference>
<reference key="2">
    <citation type="journal article" date="1989" name="Gene">
        <title>Identification and characterization of the nifH and nifJ promoter regions located on the nif-plasmid pEA3 of Enterobacter agglomerans 333.</title>
        <authorList>
            <person name="Kreutzer R."/>
            <person name="Singh M."/>
            <person name="Klingmueller W."/>
        </authorList>
    </citation>
    <scope>NUCLEOTIDE SEQUENCE [GENOMIC DNA] OF 1-128</scope>
    <source>
        <strain>333</strain>
    </source>
</reference>
<reference key="3">
    <citation type="journal article" date="1991" name="J. Bacteriol.">
        <title>Cotranscription of the electron transport protein genes nifJ and nifF in Enterobacter agglomerans 333.</title>
        <authorList>
            <person name="Kreutzer R."/>
            <person name="Dayananda S."/>
            <person name="Klingmueller W."/>
        </authorList>
    </citation>
    <scope>NUCLEOTIDE SEQUENCE [GENOMIC DNA] OF 1028-1173</scope>
    <source>
        <strain>333</strain>
    </source>
</reference>
<evidence type="ECO:0000250" key="1">
    <source>
        <dbReference type="UniProtKB" id="P94692"/>
    </source>
</evidence>
<evidence type="ECO:0000255" key="2">
    <source>
        <dbReference type="PROSITE-ProRule" id="PRU00711"/>
    </source>
</evidence>
<evidence type="ECO:0000256" key="3">
    <source>
        <dbReference type="SAM" id="MobiDB-lite"/>
    </source>
</evidence>
<evidence type="ECO:0000305" key="4"/>
<comment type="function">
    <text>Oxidoreductase required for the transfer of electrons from pyruvate to flavodoxin, which reduces nitrogenase.</text>
</comment>
<comment type="catalytic activity">
    <reaction>
        <text>oxidized [flavodoxin] + pyruvate + CoA + 2 H(+) = reduced [flavodoxin] + acetyl-CoA + CO2</text>
        <dbReference type="Rhea" id="RHEA:44140"/>
        <dbReference type="Rhea" id="RHEA-COMP:10622"/>
        <dbReference type="Rhea" id="RHEA-COMP:10623"/>
        <dbReference type="ChEBI" id="CHEBI:15361"/>
        <dbReference type="ChEBI" id="CHEBI:15378"/>
        <dbReference type="ChEBI" id="CHEBI:16526"/>
        <dbReference type="ChEBI" id="CHEBI:57287"/>
        <dbReference type="ChEBI" id="CHEBI:57288"/>
        <dbReference type="ChEBI" id="CHEBI:57618"/>
        <dbReference type="ChEBI" id="CHEBI:58210"/>
    </reaction>
</comment>
<comment type="cofactor">
    <cofactor evidence="1">
        <name>[4Fe-4S] cluster</name>
        <dbReference type="ChEBI" id="CHEBI:49883"/>
    </cofactor>
    <text evidence="1">Binds 3 [4Fe-4S] clusters per subunit.</text>
</comment>
<comment type="similarity">
    <text evidence="4">Belongs to the pyruvate:ferredoxin/flavodoxin oxidoreductase family.</text>
</comment>
<dbReference type="EC" id="1.2.7.-"/>
<dbReference type="EMBL" id="X78558">
    <property type="protein sequence ID" value="CAA55302.1"/>
    <property type="molecule type" value="Genomic_DNA"/>
</dbReference>
<dbReference type="EMBL" id="X99694">
    <property type="protein sequence ID" value="CAA68011.1"/>
    <property type="molecule type" value="Genomic_DNA"/>
</dbReference>
<dbReference type="EMBL" id="M26931">
    <property type="protein sequence ID" value="AAA24806.2"/>
    <property type="molecule type" value="Genomic_DNA"/>
</dbReference>
<dbReference type="EMBL" id="M38221">
    <property type="protein sequence ID" value="AAA23386.1"/>
    <property type="molecule type" value="Genomic_DNA"/>
</dbReference>
<dbReference type="PIR" id="B39414">
    <property type="entry name" value="B39414"/>
</dbReference>
<dbReference type="SMR" id="P19543"/>
<dbReference type="GO" id="GO:0051539">
    <property type="term" value="F:4 iron, 4 sulfur cluster binding"/>
    <property type="evidence" value="ECO:0007669"/>
    <property type="project" value="UniProtKB-KW"/>
</dbReference>
<dbReference type="GO" id="GO:0005506">
    <property type="term" value="F:iron ion binding"/>
    <property type="evidence" value="ECO:0007669"/>
    <property type="project" value="InterPro"/>
</dbReference>
<dbReference type="GO" id="GO:0043873">
    <property type="term" value="F:pyruvate-flavodoxin oxidoreductase activity"/>
    <property type="evidence" value="ECO:0007669"/>
    <property type="project" value="RHEA"/>
</dbReference>
<dbReference type="GO" id="GO:0030976">
    <property type="term" value="F:thiamine pyrophosphate binding"/>
    <property type="evidence" value="ECO:0007669"/>
    <property type="project" value="InterPro"/>
</dbReference>
<dbReference type="GO" id="GO:0022900">
    <property type="term" value="P:electron transport chain"/>
    <property type="evidence" value="ECO:0007669"/>
    <property type="project" value="InterPro"/>
</dbReference>
<dbReference type="GO" id="GO:0009399">
    <property type="term" value="P:nitrogen fixation"/>
    <property type="evidence" value="ECO:0007669"/>
    <property type="project" value="UniProtKB-KW"/>
</dbReference>
<dbReference type="GO" id="GO:0006979">
    <property type="term" value="P:response to oxidative stress"/>
    <property type="evidence" value="ECO:0007669"/>
    <property type="project" value="TreeGrafter"/>
</dbReference>
<dbReference type="GO" id="GO:0044281">
    <property type="term" value="P:small molecule metabolic process"/>
    <property type="evidence" value="ECO:0007669"/>
    <property type="project" value="UniProtKB-ARBA"/>
</dbReference>
<dbReference type="CDD" id="cd03377">
    <property type="entry name" value="TPP_PFOR_PNO"/>
    <property type="match status" value="1"/>
</dbReference>
<dbReference type="CDD" id="cd07034">
    <property type="entry name" value="TPP_PYR_PFOR_IOR-alpha_like"/>
    <property type="match status" value="1"/>
</dbReference>
<dbReference type="FunFam" id="3.30.70.20:FF:000022">
    <property type="entry name" value="Pyruvate:ferredoxin (Flavodoxin) oxidoreductase"/>
    <property type="match status" value="1"/>
</dbReference>
<dbReference type="FunFam" id="3.40.50.920:FF:000007">
    <property type="entry name" value="Pyruvate:ferredoxin (Flavodoxin) oxidoreductase"/>
    <property type="match status" value="1"/>
</dbReference>
<dbReference type="FunFam" id="3.40.50.970:FF:000012">
    <property type="entry name" value="Pyruvate:ferredoxin (Flavodoxin) oxidoreductase"/>
    <property type="match status" value="1"/>
</dbReference>
<dbReference type="FunFam" id="3.40.50.970:FF:000041">
    <property type="entry name" value="Pyruvate:ferredoxin (Flavodoxin) oxidoreductase"/>
    <property type="match status" value="1"/>
</dbReference>
<dbReference type="FunFam" id="3.40.920.10:FF:000001">
    <property type="entry name" value="Pyruvate:ferredoxin (Flavodoxin) oxidoreductase"/>
    <property type="match status" value="1"/>
</dbReference>
<dbReference type="Gene3D" id="3.30.70.20">
    <property type="match status" value="1"/>
</dbReference>
<dbReference type="Gene3D" id="3.40.50.920">
    <property type="match status" value="1"/>
</dbReference>
<dbReference type="Gene3D" id="3.40.50.970">
    <property type="match status" value="2"/>
</dbReference>
<dbReference type="Gene3D" id="3.40.920.10">
    <property type="entry name" value="Pyruvate-ferredoxin oxidoreductase, PFOR, domain III"/>
    <property type="match status" value="1"/>
</dbReference>
<dbReference type="Gene3D" id="4.10.780.10">
    <property type="entry name" value="Pyruvate-flavodoxin oxidoreductase, EKR domain"/>
    <property type="match status" value="1"/>
</dbReference>
<dbReference type="InterPro" id="IPR017896">
    <property type="entry name" value="4Fe4S_Fe-S-bd"/>
</dbReference>
<dbReference type="InterPro" id="IPR017900">
    <property type="entry name" value="4Fe4S_Fe_S_CS"/>
</dbReference>
<dbReference type="InterPro" id="IPR033412">
    <property type="entry name" value="PFOR_II"/>
</dbReference>
<dbReference type="InterPro" id="IPR050722">
    <property type="entry name" value="Pyruvate:ferred/Flavod_OxRd"/>
</dbReference>
<dbReference type="InterPro" id="IPR037112">
    <property type="entry name" value="Pyrv-flavodox_OxR_EKR_sf"/>
</dbReference>
<dbReference type="InterPro" id="IPR019456">
    <property type="entry name" value="Pyrv-flavodox_OxRtase_EKR"/>
</dbReference>
<dbReference type="InterPro" id="IPR019752">
    <property type="entry name" value="Pyrv/ketoisovalerate_OxRed_cat"/>
</dbReference>
<dbReference type="InterPro" id="IPR002880">
    <property type="entry name" value="Pyrv_Fd/Flavodoxin_OxRdtase_N"/>
</dbReference>
<dbReference type="InterPro" id="IPR011895">
    <property type="entry name" value="Pyrv_flavodox_OxRed"/>
</dbReference>
<dbReference type="InterPro" id="IPR002869">
    <property type="entry name" value="Pyrv_flavodox_OxRed_cen"/>
</dbReference>
<dbReference type="InterPro" id="IPR029061">
    <property type="entry name" value="THDP-binding"/>
</dbReference>
<dbReference type="InterPro" id="IPR011766">
    <property type="entry name" value="TPP_enzyme_TPP-bd"/>
</dbReference>
<dbReference type="InterPro" id="IPR009014">
    <property type="entry name" value="Transketo_C/PFOR_II"/>
</dbReference>
<dbReference type="NCBIfam" id="TIGR02176">
    <property type="entry name" value="pyruv_ox_red"/>
    <property type="match status" value="1"/>
</dbReference>
<dbReference type="PANTHER" id="PTHR32154">
    <property type="entry name" value="PYRUVATE-FLAVODOXIN OXIDOREDUCTASE-RELATED"/>
    <property type="match status" value="1"/>
</dbReference>
<dbReference type="PANTHER" id="PTHR32154:SF0">
    <property type="entry name" value="PYRUVATE-FLAVODOXIN OXIDOREDUCTASE-RELATED"/>
    <property type="match status" value="1"/>
</dbReference>
<dbReference type="Pfam" id="PF10371">
    <property type="entry name" value="EKR"/>
    <property type="match status" value="1"/>
</dbReference>
<dbReference type="Pfam" id="PF12838">
    <property type="entry name" value="Fer4_7"/>
    <property type="match status" value="1"/>
</dbReference>
<dbReference type="Pfam" id="PF17147">
    <property type="entry name" value="PFOR_II"/>
    <property type="match status" value="1"/>
</dbReference>
<dbReference type="Pfam" id="PF01558">
    <property type="entry name" value="POR"/>
    <property type="match status" value="1"/>
</dbReference>
<dbReference type="Pfam" id="PF01855">
    <property type="entry name" value="POR_N"/>
    <property type="match status" value="1"/>
</dbReference>
<dbReference type="Pfam" id="PF02775">
    <property type="entry name" value="TPP_enzyme_C"/>
    <property type="match status" value="1"/>
</dbReference>
<dbReference type="PIRSF" id="PIRSF000159">
    <property type="entry name" value="NifJ"/>
    <property type="match status" value="1"/>
</dbReference>
<dbReference type="SMART" id="SM00890">
    <property type="entry name" value="EKR"/>
    <property type="match status" value="1"/>
</dbReference>
<dbReference type="SUPFAM" id="SSF54862">
    <property type="entry name" value="4Fe-4S ferredoxins"/>
    <property type="match status" value="1"/>
</dbReference>
<dbReference type="SUPFAM" id="SSF53323">
    <property type="entry name" value="Pyruvate-ferredoxin oxidoreductase, PFOR, domain III"/>
    <property type="match status" value="1"/>
</dbReference>
<dbReference type="SUPFAM" id="SSF52518">
    <property type="entry name" value="Thiamin diphosphate-binding fold (THDP-binding)"/>
    <property type="match status" value="2"/>
</dbReference>
<dbReference type="SUPFAM" id="SSF52922">
    <property type="entry name" value="TK C-terminal domain-like"/>
    <property type="match status" value="1"/>
</dbReference>
<dbReference type="PROSITE" id="PS00198">
    <property type="entry name" value="4FE4S_FER_1"/>
    <property type="match status" value="2"/>
</dbReference>
<dbReference type="PROSITE" id="PS51379">
    <property type="entry name" value="4FE4S_FER_2"/>
    <property type="match status" value="2"/>
</dbReference>
<name>NIFJ_ENTAG</name>
<organism>
    <name type="scientific">Enterobacter agglomerans</name>
    <name type="common">Erwinia herbicola</name>
    <name type="synonym">Pantoea agglomerans</name>
    <dbReference type="NCBI Taxonomy" id="549"/>
    <lineage>
        <taxon>Bacteria</taxon>
        <taxon>Pseudomonadati</taxon>
        <taxon>Pseudomonadota</taxon>
        <taxon>Gammaproteobacteria</taxon>
        <taxon>Enterobacterales</taxon>
        <taxon>Erwiniaceae</taxon>
        <taxon>Pantoea</taxon>
        <taxon>Pantoea agglomerans group</taxon>
    </lineage>
</organism>
<keyword id="KW-0004">4Fe-4S</keyword>
<keyword id="KW-0249">Electron transport</keyword>
<keyword id="KW-0408">Iron</keyword>
<keyword id="KW-0411">Iron-sulfur</keyword>
<keyword id="KW-0479">Metal-binding</keyword>
<keyword id="KW-0535">Nitrogen fixation</keyword>
<keyword id="KW-0560">Oxidoreductase</keyword>
<keyword id="KW-0614">Plasmid</keyword>
<keyword id="KW-0677">Repeat</keyword>
<keyword id="KW-0813">Transport</keyword>
<gene>
    <name type="primary">nifJ</name>
</gene>
<feature type="chain" id="PRO_0000215554" description="Pyruvate-flavodoxin oxidoreductase">
    <location>
        <begin position="1"/>
        <end position="1173"/>
    </location>
</feature>
<feature type="domain" description="4Fe-4S ferredoxin-type 1" evidence="2">
    <location>
        <begin position="681"/>
        <end position="710"/>
    </location>
</feature>
<feature type="domain" description="4Fe-4S ferredoxin-type 2" evidence="2">
    <location>
        <begin position="735"/>
        <end position="766"/>
    </location>
</feature>
<feature type="region of interest" description="Disordered" evidence="3">
    <location>
        <begin position="922"/>
        <end position="946"/>
    </location>
</feature>
<feature type="compositionally biased region" description="Basic and acidic residues" evidence="3">
    <location>
        <begin position="922"/>
        <end position="933"/>
    </location>
</feature>
<feature type="binding site" evidence="1">
    <location>
        <position position="690"/>
    </location>
    <ligand>
        <name>[4Fe-4S] cluster</name>
        <dbReference type="ChEBI" id="CHEBI:49883"/>
        <label>1</label>
    </ligand>
</feature>
<feature type="binding site" evidence="1">
    <location>
        <position position="693"/>
    </location>
    <ligand>
        <name>[4Fe-4S] cluster</name>
        <dbReference type="ChEBI" id="CHEBI:49883"/>
        <label>1</label>
    </ligand>
</feature>
<feature type="binding site" evidence="1">
    <location>
        <position position="696"/>
    </location>
    <ligand>
        <name>[4Fe-4S] cluster</name>
        <dbReference type="ChEBI" id="CHEBI:49883"/>
        <label>1</label>
    </ligand>
</feature>
<feature type="binding site" evidence="1">
    <location>
        <position position="700"/>
    </location>
    <ligand>
        <name>[4Fe-4S] cluster</name>
        <dbReference type="ChEBI" id="CHEBI:49883"/>
        <label>2</label>
    </ligand>
</feature>
<feature type="binding site" evidence="1">
    <location>
        <position position="744"/>
    </location>
    <ligand>
        <name>[4Fe-4S] cluster</name>
        <dbReference type="ChEBI" id="CHEBI:49883"/>
        <label>2</label>
    </ligand>
</feature>
<feature type="binding site" evidence="1">
    <location>
        <position position="747"/>
    </location>
    <ligand>
        <name>[4Fe-4S] cluster</name>
        <dbReference type="ChEBI" id="CHEBI:49883"/>
        <label>2</label>
    </ligand>
</feature>
<feature type="binding site" evidence="1">
    <location>
        <position position="750"/>
    </location>
    <ligand>
        <name>[4Fe-4S] cluster</name>
        <dbReference type="ChEBI" id="CHEBI:49883"/>
        <label>2</label>
    </ligand>
</feature>
<feature type="binding site" evidence="1">
    <location>
        <position position="754"/>
    </location>
    <ligand>
        <name>[4Fe-4S] cluster</name>
        <dbReference type="ChEBI" id="CHEBI:49883"/>
        <label>1</label>
    </ligand>
</feature>
<feature type="binding site" evidence="1">
    <location>
        <position position="810"/>
    </location>
    <ligand>
        <name>[4Fe-4S] cluster</name>
        <dbReference type="ChEBI" id="CHEBI:49883"/>
        <label>3</label>
    </ligand>
</feature>
<feature type="binding site" evidence="1">
    <location>
        <position position="813"/>
    </location>
    <ligand>
        <name>[4Fe-4S] cluster</name>
        <dbReference type="ChEBI" id="CHEBI:49883"/>
        <label>3</label>
    </ligand>
</feature>
<feature type="binding site" evidence="1">
    <location>
        <position position="838"/>
    </location>
    <ligand>
        <name>[4Fe-4S] cluster</name>
        <dbReference type="ChEBI" id="CHEBI:49883"/>
        <label>3</label>
    </ligand>
</feature>
<feature type="binding site" evidence="1">
    <location>
        <position position="1075"/>
    </location>
    <ligand>
        <name>[4Fe-4S] cluster</name>
        <dbReference type="ChEBI" id="CHEBI:49883"/>
        <label>3</label>
    </ligand>
</feature>
<sequence length="1173" mass="128246">MPGKMKTMDGNTAAAYVSYAFTDVTAIYPITPSTPMAESVDEWAAQGKKNLFGQTVKIMEMQSESGAAGAIHGALQAGALATTYTASQGLLLMTPNMYKIAGELLPAVFHVSARALATNSLNIFGDHQDSYAVRHTGCAMLAESSVQQVMDLAAVAHLTAIKGRIPFINFFDGFRTSHEIQKIEVLDYEDLAHLLDRDAVARFRQNALHPDHPVVRGTAQNPDIYFQEREASNKFYMALPEMVESYMAKISALTGREYHLFNYYGAPDAGRMIIAMGSVCETIQETVDYLNARGEKVGVLTVHLYRPFSLKHFFKYIPKSVSNIAVLDRTKEPGSLAEPLYLDVKSAFYNSDWRPVIVGGRYALGGKDILPSHIISIFDNLAAERPRDGFTVGINDDVTFTSLPLSDRDIDTSSSGTTACKFWGLGSDGTVGANKSAIKIIGDKTDMYAQAYFAYDSKKSGGVTMSHLRFGHNPIRSPYLIDKADFISCSQQSYVNKYHLLAGLKPGGTFLLNCSWDVAELDEKLPVAMKRYIAANDIQFYIVNAVGIAQKLGLGGRFNMIMQSAFFKLADIIPLTRAVEYLKQSIEHAYGNKGQKIVDMNNLAVDSGIESVVKISVPQAWKHLEDKVVSPKKLPAFIKDILIPMNRQEGDSLPVSIFDGIEDGTFPSGTSAYEKRGVAINVPVWQTDKCTQCNQCAFICPHAAIRPVLISEEERQNAPAGFSAKRASGTEDAWYRLAVSPLDCSGCGNCADVCPVKGKALSMQPLESQEHEIELWEYALSLTPKANPQNKFTVKGSQFEQPLLEFSGACGGCGETPYAKLVTQLFGDRMMIANATGCSSIWGASAPSIPYTTNHKGQGPTWANSLFEDNAEFGLGMLLGVDAIRDTLATQVKAALDNAPDVPLDAELSACLSDWLANKDQGEGTRERAEKVGDTSGFANAREKSRTPTVSMPHRDYLANGSHWIFGGDGWAYDIGFGGLDHVLASGKDVNVLVFDTEVYSNTGGQSSKSTPAAAIAQFACKKTRKKDLGMMAMSYGYVYVAQIAMGADKNQTLRAIAEAEAYPGPSLIIAYAACINHGLRIGMGCSQREARRAVEAGYWANYRYHPELKEAGKNPFILDSEEPEEDFQAFLAGEVRYSSLKKLYPEFAEFLFKKTEDDARERLEGYKKLASS</sequence>